<name>RPOA_PSEP7</name>
<dbReference type="EC" id="2.7.7.6" evidence="1"/>
<dbReference type="EMBL" id="CP000744">
    <property type="protein sequence ID" value="ABR81740.1"/>
    <property type="molecule type" value="Genomic_DNA"/>
</dbReference>
<dbReference type="RefSeq" id="WP_003093675.1">
    <property type="nucleotide sequence ID" value="NC_009656.1"/>
</dbReference>
<dbReference type="SMR" id="A6UZL3"/>
<dbReference type="KEGG" id="pap:PSPA7_0862"/>
<dbReference type="HOGENOM" id="CLU_053084_0_0_6"/>
<dbReference type="Proteomes" id="UP000001582">
    <property type="component" value="Chromosome"/>
</dbReference>
<dbReference type="GO" id="GO:0005737">
    <property type="term" value="C:cytoplasm"/>
    <property type="evidence" value="ECO:0007669"/>
    <property type="project" value="UniProtKB-ARBA"/>
</dbReference>
<dbReference type="GO" id="GO:0000428">
    <property type="term" value="C:DNA-directed RNA polymerase complex"/>
    <property type="evidence" value="ECO:0007669"/>
    <property type="project" value="UniProtKB-KW"/>
</dbReference>
<dbReference type="GO" id="GO:0003677">
    <property type="term" value="F:DNA binding"/>
    <property type="evidence" value="ECO:0007669"/>
    <property type="project" value="UniProtKB-UniRule"/>
</dbReference>
<dbReference type="GO" id="GO:0003899">
    <property type="term" value="F:DNA-directed RNA polymerase activity"/>
    <property type="evidence" value="ECO:0007669"/>
    <property type="project" value="UniProtKB-UniRule"/>
</dbReference>
<dbReference type="GO" id="GO:0046983">
    <property type="term" value="F:protein dimerization activity"/>
    <property type="evidence" value="ECO:0007669"/>
    <property type="project" value="InterPro"/>
</dbReference>
<dbReference type="GO" id="GO:0006351">
    <property type="term" value="P:DNA-templated transcription"/>
    <property type="evidence" value="ECO:0007669"/>
    <property type="project" value="UniProtKB-UniRule"/>
</dbReference>
<dbReference type="CDD" id="cd06928">
    <property type="entry name" value="RNAP_alpha_NTD"/>
    <property type="match status" value="1"/>
</dbReference>
<dbReference type="FunFam" id="1.10.150.20:FF:000001">
    <property type="entry name" value="DNA-directed RNA polymerase subunit alpha"/>
    <property type="match status" value="1"/>
</dbReference>
<dbReference type="FunFam" id="2.170.120.12:FF:000001">
    <property type="entry name" value="DNA-directed RNA polymerase subunit alpha"/>
    <property type="match status" value="1"/>
</dbReference>
<dbReference type="Gene3D" id="1.10.150.20">
    <property type="entry name" value="5' to 3' exonuclease, C-terminal subdomain"/>
    <property type="match status" value="1"/>
</dbReference>
<dbReference type="Gene3D" id="2.170.120.12">
    <property type="entry name" value="DNA-directed RNA polymerase, insert domain"/>
    <property type="match status" value="1"/>
</dbReference>
<dbReference type="Gene3D" id="3.30.1360.10">
    <property type="entry name" value="RNA polymerase, RBP11-like subunit"/>
    <property type="match status" value="1"/>
</dbReference>
<dbReference type="HAMAP" id="MF_00059">
    <property type="entry name" value="RNApol_bact_RpoA"/>
    <property type="match status" value="1"/>
</dbReference>
<dbReference type="InterPro" id="IPR011262">
    <property type="entry name" value="DNA-dir_RNA_pol_insert"/>
</dbReference>
<dbReference type="InterPro" id="IPR011263">
    <property type="entry name" value="DNA-dir_RNA_pol_RpoA/D/Rpb3"/>
</dbReference>
<dbReference type="InterPro" id="IPR011773">
    <property type="entry name" value="DNA-dir_RpoA"/>
</dbReference>
<dbReference type="InterPro" id="IPR036603">
    <property type="entry name" value="RBP11-like"/>
</dbReference>
<dbReference type="InterPro" id="IPR011260">
    <property type="entry name" value="RNAP_asu_C"/>
</dbReference>
<dbReference type="InterPro" id="IPR036643">
    <property type="entry name" value="RNApol_insert_sf"/>
</dbReference>
<dbReference type="NCBIfam" id="NF003513">
    <property type="entry name" value="PRK05182.1-2"/>
    <property type="match status" value="1"/>
</dbReference>
<dbReference type="NCBIfam" id="NF003519">
    <property type="entry name" value="PRK05182.2-5"/>
    <property type="match status" value="1"/>
</dbReference>
<dbReference type="NCBIfam" id="TIGR02027">
    <property type="entry name" value="rpoA"/>
    <property type="match status" value="1"/>
</dbReference>
<dbReference type="Pfam" id="PF01000">
    <property type="entry name" value="RNA_pol_A_bac"/>
    <property type="match status" value="1"/>
</dbReference>
<dbReference type="Pfam" id="PF03118">
    <property type="entry name" value="RNA_pol_A_CTD"/>
    <property type="match status" value="1"/>
</dbReference>
<dbReference type="Pfam" id="PF01193">
    <property type="entry name" value="RNA_pol_L"/>
    <property type="match status" value="1"/>
</dbReference>
<dbReference type="SMART" id="SM00662">
    <property type="entry name" value="RPOLD"/>
    <property type="match status" value="1"/>
</dbReference>
<dbReference type="SUPFAM" id="SSF47789">
    <property type="entry name" value="C-terminal domain of RNA polymerase alpha subunit"/>
    <property type="match status" value="1"/>
</dbReference>
<dbReference type="SUPFAM" id="SSF56553">
    <property type="entry name" value="Insert subdomain of RNA polymerase alpha subunit"/>
    <property type="match status" value="1"/>
</dbReference>
<dbReference type="SUPFAM" id="SSF55257">
    <property type="entry name" value="RBP11-like subunits of RNA polymerase"/>
    <property type="match status" value="1"/>
</dbReference>
<accession>A6UZL3</accession>
<reference key="1">
    <citation type="submission" date="2007-06" db="EMBL/GenBank/DDBJ databases">
        <authorList>
            <person name="Dodson R.J."/>
            <person name="Harkins D."/>
            <person name="Paulsen I.T."/>
        </authorList>
    </citation>
    <scope>NUCLEOTIDE SEQUENCE [LARGE SCALE GENOMIC DNA]</scope>
    <source>
        <strain>DSM 24068 / PA7</strain>
    </source>
</reference>
<sequence>MQSSVNEFLTPRHIDVQVVSQTRAKITLEPLERGFGHTLGNALRRILLSSMPGCAVVEAEIDGVLHEYSAIEGVQEDVIEILLNLKGLAIKLHGRDEVTLTLAKKGSGVVTAADIQLDHDVEIINGDHVIANLADNGALNMKLKVARGRGYEPADARQSDEDESRSIGRLQLDASFSPVRRVSYVVENARVEQRTNLDKLVLDLETNGTLDPEEAIRRAATILQQQLAAFVDLKGDSEPVVEEQEDEIDPILLRPVDDLELTVRSANCLKAENIYYIGDLIQRTEVELLKTPNLGKKSLTEIKDVLASRGLSLGMRLDNWPPASLKKDDKATA</sequence>
<protein>
    <recommendedName>
        <fullName evidence="1">DNA-directed RNA polymerase subunit alpha</fullName>
        <shortName evidence="1">RNAP subunit alpha</shortName>
        <ecNumber evidence="1">2.7.7.6</ecNumber>
    </recommendedName>
    <alternativeName>
        <fullName evidence="1">RNA polymerase subunit alpha</fullName>
    </alternativeName>
    <alternativeName>
        <fullName evidence="1">Transcriptase subunit alpha</fullName>
    </alternativeName>
</protein>
<organism>
    <name type="scientific">Pseudomonas paraeruginosa (strain DSM 24068 / PA7)</name>
    <name type="common">Pseudomonas aeruginosa (strain PA7)</name>
    <dbReference type="NCBI Taxonomy" id="381754"/>
    <lineage>
        <taxon>Bacteria</taxon>
        <taxon>Pseudomonadati</taxon>
        <taxon>Pseudomonadota</taxon>
        <taxon>Gammaproteobacteria</taxon>
        <taxon>Pseudomonadales</taxon>
        <taxon>Pseudomonadaceae</taxon>
        <taxon>Pseudomonas</taxon>
        <taxon>Pseudomonas paraeruginosa</taxon>
    </lineage>
</organism>
<comment type="function">
    <text evidence="1">DNA-dependent RNA polymerase catalyzes the transcription of DNA into RNA using the four ribonucleoside triphosphates as substrates.</text>
</comment>
<comment type="catalytic activity">
    <reaction evidence="1">
        <text>RNA(n) + a ribonucleoside 5'-triphosphate = RNA(n+1) + diphosphate</text>
        <dbReference type="Rhea" id="RHEA:21248"/>
        <dbReference type="Rhea" id="RHEA-COMP:14527"/>
        <dbReference type="Rhea" id="RHEA-COMP:17342"/>
        <dbReference type="ChEBI" id="CHEBI:33019"/>
        <dbReference type="ChEBI" id="CHEBI:61557"/>
        <dbReference type="ChEBI" id="CHEBI:140395"/>
        <dbReference type="EC" id="2.7.7.6"/>
    </reaction>
</comment>
<comment type="subunit">
    <text evidence="1">Homodimer. The RNAP catalytic core consists of 2 alpha, 1 beta, 1 beta' and 1 omega subunit. When a sigma factor is associated with the core the holoenzyme is formed, which can initiate transcription.</text>
</comment>
<comment type="domain">
    <text evidence="1">The N-terminal domain is essential for RNAP assembly and basal transcription, whereas the C-terminal domain is involved in interaction with transcriptional regulators and with upstream promoter elements.</text>
</comment>
<comment type="similarity">
    <text evidence="1">Belongs to the RNA polymerase alpha chain family.</text>
</comment>
<proteinExistence type="inferred from homology"/>
<evidence type="ECO:0000255" key="1">
    <source>
        <dbReference type="HAMAP-Rule" id="MF_00059"/>
    </source>
</evidence>
<feature type="chain" id="PRO_0000323646" description="DNA-directed RNA polymerase subunit alpha">
    <location>
        <begin position="1"/>
        <end position="333"/>
    </location>
</feature>
<feature type="region of interest" description="Alpha N-terminal domain (alpha-NTD)" evidence="1">
    <location>
        <begin position="1"/>
        <end position="234"/>
    </location>
</feature>
<feature type="region of interest" description="Alpha C-terminal domain (alpha-CTD)" evidence="1">
    <location>
        <begin position="248"/>
        <end position="333"/>
    </location>
</feature>
<gene>
    <name evidence="1" type="primary">rpoA</name>
    <name type="ordered locus">PSPA7_0862</name>
</gene>
<keyword id="KW-0240">DNA-directed RNA polymerase</keyword>
<keyword id="KW-0548">Nucleotidyltransferase</keyword>
<keyword id="KW-0804">Transcription</keyword>
<keyword id="KW-0808">Transferase</keyword>